<accession>Q6D6H3</accession>
<evidence type="ECO:0000250" key="1"/>
<evidence type="ECO:0000255" key="2"/>
<evidence type="ECO:0000305" key="3"/>
<protein>
    <recommendedName>
        <fullName>Flagellar L-ring protein</fullName>
    </recommendedName>
    <alternativeName>
        <fullName>Basal body L-ring protein</fullName>
    </alternativeName>
</protein>
<reference key="1">
    <citation type="journal article" date="2004" name="Proc. Natl. Acad. Sci. U.S.A.">
        <title>Genome sequence of the enterobacterial phytopathogen Erwinia carotovora subsp. atroseptica and characterization of virulence factors.</title>
        <authorList>
            <person name="Bell K.S."/>
            <person name="Sebaihia M."/>
            <person name="Pritchard L."/>
            <person name="Holden M.T.G."/>
            <person name="Hyman L.J."/>
            <person name="Holeva M.C."/>
            <person name="Thomson N.R."/>
            <person name="Bentley S.D."/>
            <person name="Churcher L.J.C."/>
            <person name="Mungall K."/>
            <person name="Atkin R."/>
            <person name="Bason N."/>
            <person name="Brooks K."/>
            <person name="Chillingworth T."/>
            <person name="Clark K."/>
            <person name="Doggett J."/>
            <person name="Fraser A."/>
            <person name="Hance Z."/>
            <person name="Hauser H."/>
            <person name="Jagels K."/>
            <person name="Moule S."/>
            <person name="Norbertczak H."/>
            <person name="Ormond D."/>
            <person name="Price C."/>
            <person name="Quail M.A."/>
            <person name="Sanders M."/>
            <person name="Walker D."/>
            <person name="Whitehead S."/>
            <person name="Salmond G.P.C."/>
            <person name="Birch P.R.J."/>
            <person name="Parkhill J."/>
            <person name="Toth I.K."/>
        </authorList>
    </citation>
    <scope>NUCLEOTIDE SEQUENCE [LARGE SCALE GENOMIC DNA]</scope>
    <source>
        <strain>SCRI 1043 / ATCC BAA-672</strain>
    </source>
</reference>
<organism>
    <name type="scientific">Pectobacterium atrosepticum (strain SCRI 1043 / ATCC BAA-672)</name>
    <name type="common">Erwinia carotovora subsp. atroseptica</name>
    <dbReference type="NCBI Taxonomy" id="218491"/>
    <lineage>
        <taxon>Bacteria</taxon>
        <taxon>Pseudomonadati</taxon>
        <taxon>Pseudomonadota</taxon>
        <taxon>Gammaproteobacteria</taxon>
        <taxon>Enterobacterales</taxon>
        <taxon>Pectobacteriaceae</taxon>
        <taxon>Pectobacterium</taxon>
    </lineage>
</organism>
<keyword id="KW-0975">Bacterial flagellum</keyword>
<keyword id="KW-0998">Cell outer membrane</keyword>
<keyword id="KW-0449">Lipoprotein</keyword>
<keyword id="KW-0472">Membrane</keyword>
<keyword id="KW-0564">Palmitate</keyword>
<keyword id="KW-1185">Reference proteome</keyword>
<keyword id="KW-0732">Signal</keyword>
<sequence length="237" mass="25119">MNAKSVIKPLRRPRLLALIAMLALNGCAYIPHDKVVTGPTTAQPGSPVLAGPNGSIFQTVQPMNYGYQPMFEDRRPRNIGDTLTIVLQENVSASKSSSANAARNGSSTFGVATTPRYLEGPLGNNRAALDATGTNDFSGKGGANANNTFSGTITVTVGQVLANGNLNVVGEKQIAINQGTEFIRFSGVVNPRTISGNNSVPSTQVADARIEYVGNGYINEAQNMGWLQRFFLNVSPF</sequence>
<comment type="function">
    <text evidence="1">Assembles around the rod to form the L-ring and probably protects the motor/basal body from shearing forces during rotation.</text>
</comment>
<comment type="subunit">
    <text evidence="1">The basal body constitutes a major portion of the flagellar organelle and consists of four rings (L,P,S, and M) mounted on a central rod.</text>
</comment>
<comment type="subcellular location">
    <subcellularLocation>
        <location evidence="1">Cell outer membrane</location>
        <topology evidence="1">Lipid-anchor</topology>
    </subcellularLocation>
    <subcellularLocation>
        <location evidence="1">Bacterial flagellum basal body</location>
    </subcellularLocation>
</comment>
<comment type="similarity">
    <text evidence="3">Belongs to the FlgH family.</text>
</comment>
<comment type="sequence caution" evidence="3">
    <conflict type="erroneous initiation">
        <sequence resource="EMBL-CDS" id="CAG74614"/>
    </conflict>
</comment>
<dbReference type="EMBL" id="BX950851">
    <property type="protein sequence ID" value="CAG74614.1"/>
    <property type="status" value="ALT_INIT"/>
    <property type="molecule type" value="Genomic_DNA"/>
</dbReference>
<dbReference type="RefSeq" id="WP_039292566.1">
    <property type="nucleotide sequence ID" value="NC_004547.2"/>
</dbReference>
<dbReference type="SMR" id="Q6D6H3"/>
<dbReference type="STRING" id="218491.ECA1708"/>
<dbReference type="DNASU" id="2881851"/>
<dbReference type="KEGG" id="eca:ECA1708"/>
<dbReference type="PATRIC" id="fig|218491.5.peg.1735"/>
<dbReference type="eggNOG" id="COG2063">
    <property type="taxonomic scope" value="Bacteria"/>
</dbReference>
<dbReference type="HOGENOM" id="CLU_069313_0_0_6"/>
<dbReference type="OrthoDB" id="9789463at2"/>
<dbReference type="Proteomes" id="UP000007966">
    <property type="component" value="Chromosome"/>
</dbReference>
<dbReference type="GO" id="GO:0009427">
    <property type="term" value="C:bacterial-type flagellum basal body, distal rod, L ring"/>
    <property type="evidence" value="ECO:0007669"/>
    <property type="project" value="InterPro"/>
</dbReference>
<dbReference type="GO" id="GO:0009279">
    <property type="term" value="C:cell outer membrane"/>
    <property type="evidence" value="ECO:0007669"/>
    <property type="project" value="UniProtKB-SubCell"/>
</dbReference>
<dbReference type="GO" id="GO:0003774">
    <property type="term" value="F:cytoskeletal motor activity"/>
    <property type="evidence" value="ECO:0007669"/>
    <property type="project" value="InterPro"/>
</dbReference>
<dbReference type="GO" id="GO:0071973">
    <property type="term" value="P:bacterial-type flagellum-dependent cell motility"/>
    <property type="evidence" value="ECO:0007669"/>
    <property type="project" value="InterPro"/>
</dbReference>
<dbReference type="HAMAP" id="MF_00415">
    <property type="entry name" value="FlgH"/>
    <property type="match status" value="1"/>
</dbReference>
<dbReference type="InterPro" id="IPR000527">
    <property type="entry name" value="Flag_Lring"/>
</dbReference>
<dbReference type="PANTHER" id="PTHR34933">
    <property type="entry name" value="FLAGELLAR L-RING PROTEIN"/>
    <property type="match status" value="1"/>
</dbReference>
<dbReference type="PANTHER" id="PTHR34933:SF3">
    <property type="entry name" value="FLAGELLAR L-RING PROTEIN"/>
    <property type="match status" value="1"/>
</dbReference>
<dbReference type="Pfam" id="PF02107">
    <property type="entry name" value="FlgH"/>
    <property type="match status" value="1"/>
</dbReference>
<dbReference type="PRINTS" id="PR01008">
    <property type="entry name" value="FLGLRINGFLGH"/>
</dbReference>
<gene>
    <name type="primary">flgH</name>
    <name type="ordered locus">ECA1708</name>
</gene>
<proteinExistence type="inferred from homology"/>
<name>FLGH_PECAS</name>
<feature type="signal peptide" evidence="2">
    <location>
        <begin position="1"/>
        <end position="26"/>
    </location>
</feature>
<feature type="chain" id="PRO_0000009446" description="Flagellar L-ring protein">
    <location>
        <begin position="27"/>
        <end position="237"/>
    </location>
</feature>
<feature type="lipid moiety-binding region" description="N-palmitoyl cysteine" evidence="2">
    <location>
        <position position="27"/>
    </location>
</feature>
<feature type="lipid moiety-binding region" description="S-diacylglycerol cysteine" evidence="2">
    <location>
        <position position="27"/>
    </location>
</feature>